<name>DHB8_CANLF</name>
<evidence type="ECO:0000250" key="1"/>
<evidence type="ECO:0000250" key="2">
    <source>
        <dbReference type="UniProtKB" id="P50171"/>
    </source>
</evidence>
<evidence type="ECO:0000250" key="3">
    <source>
        <dbReference type="UniProtKB" id="Q92506"/>
    </source>
</evidence>
<evidence type="ECO:0000255" key="4">
    <source>
        <dbReference type="PROSITE-ProRule" id="PRU10001"/>
    </source>
</evidence>
<evidence type="ECO:0000305" key="5"/>
<sequence>MASPLRLRSALALVTGAGSGIGRAVSVRLAKEGATVAACDLDRAAACETVWLLGGQGSEKVAPGGAHTAFQADVSEAGAVRRLLEQVQACFSRPPSVVVSCAGLTRDEFLLRMSEDDWDRVIAVNLKGIFLVTQAAAQALVSSGCRGSIINISSIVGKVGNVGQTNYAASKAGVIGLTQTAARELGRHGIRCNSVLPGFITTPMTQKVPQKVLDKVIGMIPMGHLGDPEDVADAVTFLASEDSGYITGASVEVTGGLYM</sequence>
<gene>
    <name type="primary">HSD17B8</name>
</gene>
<keyword id="KW-0275">Fatty acid biosynthesis</keyword>
<keyword id="KW-0276">Fatty acid metabolism</keyword>
<keyword id="KW-0444">Lipid biosynthesis</keyword>
<keyword id="KW-0443">Lipid metabolism</keyword>
<keyword id="KW-0496">Mitochondrion</keyword>
<keyword id="KW-0520">NAD</keyword>
<keyword id="KW-0560">Oxidoreductase</keyword>
<keyword id="KW-0597">Phosphoprotein</keyword>
<keyword id="KW-1185">Reference proteome</keyword>
<keyword id="KW-0752">Steroid biosynthesis</keyword>
<feature type="chain" id="PRO_0000054597" description="(3R)-3-hydroxyacyl-CoA dehydrogenase">
    <location>
        <begin position="1"/>
        <end position="259"/>
    </location>
</feature>
<feature type="active site" description="Proton acceptor" evidence="4">
    <location>
        <position position="167"/>
    </location>
</feature>
<feature type="binding site" evidence="3">
    <location>
        <begin position="13"/>
        <end position="21"/>
    </location>
    <ligand>
        <name>NAD(+)</name>
        <dbReference type="ChEBI" id="CHEBI:57540"/>
    </ligand>
</feature>
<feature type="binding site" evidence="3">
    <location>
        <begin position="40"/>
        <end position="41"/>
    </location>
    <ligand>
        <name>NAD(+)</name>
        <dbReference type="ChEBI" id="CHEBI:57540"/>
    </ligand>
</feature>
<feature type="binding site" evidence="3">
    <location>
        <begin position="72"/>
        <end position="74"/>
    </location>
    <ligand>
        <name>NAD(+)</name>
        <dbReference type="ChEBI" id="CHEBI:57540"/>
    </ligand>
</feature>
<feature type="binding site" evidence="1">
    <location>
        <position position="154"/>
    </location>
    <ligand>
        <name>substrate</name>
    </ligand>
</feature>
<feature type="binding site" evidence="3">
    <location>
        <begin position="167"/>
        <end position="171"/>
    </location>
    <ligand>
        <name>NAD(+)</name>
        <dbReference type="ChEBI" id="CHEBI:57540"/>
    </ligand>
</feature>
<feature type="binding site" evidence="3">
    <location>
        <begin position="200"/>
        <end position="202"/>
    </location>
    <ligand>
        <name>NAD(+)</name>
        <dbReference type="ChEBI" id="CHEBI:57540"/>
    </ligand>
</feature>
<feature type="modified residue" description="Phosphoserine" evidence="2">
    <location>
        <position position="58"/>
    </location>
</feature>
<feature type="modified residue" description="N6-succinyllysine" evidence="2">
    <location>
        <position position="158"/>
    </location>
</feature>
<feature type="modified residue" description="N6-succinyllysine" evidence="2">
    <location>
        <position position="171"/>
    </location>
</feature>
<dbReference type="EC" id="1.1.1.n12" evidence="3"/>
<dbReference type="EC" id="1.1.1.62" evidence="3"/>
<dbReference type="EC" id="1.1.1.239" evidence="3"/>
<dbReference type="EMBL" id="AJ630366">
    <property type="protein sequence ID" value="CAI11433.1"/>
    <property type="molecule type" value="Genomic_DNA"/>
</dbReference>
<dbReference type="RefSeq" id="XP_038539110.1">
    <property type="nucleotide sequence ID" value="XM_038683182.1"/>
</dbReference>
<dbReference type="SMR" id="Q5TJF5"/>
<dbReference type="FunCoup" id="Q5TJF5">
    <property type="interactions" value="481"/>
</dbReference>
<dbReference type="PaxDb" id="9612-ENSCAFP00000001317"/>
<dbReference type="Ensembl" id="ENSCAFT00845036315.1">
    <property type="protein sequence ID" value="ENSCAFP00845028421.1"/>
    <property type="gene ID" value="ENSCAFG00845020603.1"/>
</dbReference>
<dbReference type="GeneID" id="607895"/>
<dbReference type="VEuPathDB" id="HostDB:ENSCAFG00845020603"/>
<dbReference type="eggNOG" id="KOG1200">
    <property type="taxonomic scope" value="Eukaryota"/>
</dbReference>
<dbReference type="GeneTree" id="ENSGT00940000160668"/>
<dbReference type="InParanoid" id="Q5TJF5"/>
<dbReference type="OrthoDB" id="294295at2759"/>
<dbReference type="Reactome" id="R-CFA-75105">
    <property type="pathway name" value="Fatty acyl-CoA biosynthesis"/>
</dbReference>
<dbReference type="UniPathway" id="UPA00094"/>
<dbReference type="UniPathway" id="UPA00660"/>
<dbReference type="UniPathway" id="UPA00769"/>
<dbReference type="Proteomes" id="UP000002254">
    <property type="component" value="Unplaced"/>
</dbReference>
<dbReference type="Proteomes" id="UP000694429">
    <property type="component" value="Unplaced"/>
</dbReference>
<dbReference type="Proteomes" id="UP000694542">
    <property type="component" value="Unplaced"/>
</dbReference>
<dbReference type="Proteomes" id="UP000805418">
    <property type="component" value="Chromosome 12"/>
</dbReference>
<dbReference type="GO" id="GO:0005740">
    <property type="term" value="C:mitochondrial envelope"/>
    <property type="evidence" value="ECO:0007669"/>
    <property type="project" value="Ensembl"/>
</dbReference>
<dbReference type="GO" id="GO:0005759">
    <property type="term" value="C:mitochondrial matrix"/>
    <property type="evidence" value="ECO:0007669"/>
    <property type="project" value="UniProtKB-SubCell"/>
</dbReference>
<dbReference type="GO" id="GO:1990204">
    <property type="term" value="C:oxidoreductase complex"/>
    <property type="evidence" value="ECO:0007669"/>
    <property type="project" value="Ensembl"/>
</dbReference>
<dbReference type="GO" id="GO:0005886">
    <property type="term" value="C:plasma membrane"/>
    <property type="evidence" value="ECO:0007669"/>
    <property type="project" value="Ensembl"/>
</dbReference>
<dbReference type="GO" id="GO:0106386">
    <property type="term" value="F:(3R)-hydroxyacyl-CoA dehydrogenase (NAD+) activity"/>
    <property type="evidence" value="ECO:0000250"/>
    <property type="project" value="UniProtKB"/>
</dbReference>
<dbReference type="GO" id="GO:0004303">
    <property type="term" value="F:estradiol 17-beta-dehydrogenase [NAD(P)+] activity"/>
    <property type="evidence" value="ECO:0000250"/>
    <property type="project" value="UniProtKB"/>
</dbReference>
<dbReference type="GO" id="GO:0070404">
    <property type="term" value="F:NADH binding"/>
    <property type="evidence" value="ECO:0000250"/>
    <property type="project" value="UniProtKB"/>
</dbReference>
<dbReference type="GO" id="GO:0048038">
    <property type="term" value="F:quinone binding"/>
    <property type="evidence" value="ECO:0000318"/>
    <property type="project" value="GO_Central"/>
</dbReference>
<dbReference type="GO" id="GO:0047035">
    <property type="term" value="F:testosterone dehydrogenase (NAD+) activity"/>
    <property type="evidence" value="ECO:0007669"/>
    <property type="project" value="UniProtKB-EC"/>
</dbReference>
<dbReference type="GO" id="GO:0008209">
    <property type="term" value="P:androgen metabolic process"/>
    <property type="evidence" value="ECO:0007669"/>
    <property type="project" value="Ensembl"/>
</dbReference>
<dbReference type="GO" id="GO:0006703">
    <property type="term" value="P:estrogen biosynthetic process"/>
    <property type="evidence" value="ECO:0000250"/>
    <property type="project" value="UniProtKB"/>
</dbReference>
<dbReference type="GO" id="GO:0006633">
    <property type="term" value="P:fatty acid biosynthetic process"/>
    <property type="evidence" value="ECO:0000250"/>
    <property type="project" value="UniProtKB"/>
</dbReference>
<dbReference type="GO" id="GO:0051290">
    <property type="term" value="P:protein heterotetramerization"/>
    <property type="evidence" value="ECO:0000250"/>
    <property type="project" value="UniProtKB"/>
</dbReference>
<dbReference type="CDD" id="cd05333">
    <property type="entry name" value="BKR_SDR_c"/>
    <property type="match status" value="1"/>
</dbReference>
<dbReference type="FunFam" id="3.40.50.720:FF:000231">
    <property type="entry name" value="Estradiol 17-beta-dehydrogenase 8"/>
    <property type="match status" value="1"/>
</dbReference>
<dbReference type="Gene3D" id="3.40.50.720">
    <property type="entry name" value="NAD(P)-binding Rossmann-like Domain"/>
    <property type="match status" value="1"/>
</dbReference>
<dbReference type="InterPro" id="IPR036291">
    <property type="entry name" value="NAD(P)-bd_dom_sf"/>
</dbReference>
<dbReference type="InterPro" id="IPR020904">
    <property type="entry name" value="Sc_DH/Rdtase_CS"/>
</dbReference>
<dbReference type="InterPro" id="IPR002347">
    <property type="entry name" value="SDR_fam"/>
</dbReference>
<dbReference type="NCBIfam" id="NF009466">
    <property type="entry name" value="PRK12826.1-2"/>
    <property type="match status" value="1"/>
</dbReference>
<dbReference type="PANTHER" id="PTHR42760:SF120">
    <property type="entry name" value="(3R)-3-HYDROXYACYL-COA DEHYDROGENASE"/>
    <property type="match status" value="1"/>
</dbReference>
<dbReference type="PANTHER" id="PTHR42760">
    <property type="entry name" value="SHORT-CHAIN DEHYDROGENASES/REDUCTASES FAMILY MEMBER"/>
    <property type="match status" value="1"/>
</dbReference>
<dbReference type="Pfam" id="PF13561">
    <property type="entry name" value="adh_short_C2"/>
    <property type="match status" value="1"/>
</dbReference>
<dbReference type="PRINTS" id="PR00081">
    <property type="entry name" value="GDHRDH"/>
</dbReference>
<dbReference type="PRINTS" id="PR00080">
    <property type="entry name" value="SDRFAMILY"/>
</dbReference>
<dbReference type="SMART" id="SM00822">
    <property type="entry name" value="PKS_KR"/>
    <property type="match status" value="1"/>
</dbReference>
<dbReference type="SUPFAM" id="SSF51735">
    <property type="entry name" value="NAD(P)-binding Rossmann-fold domains"/>
    <property type="match status" value="1"/>
</dbReference>
<dbReference type="PROSITE" id="PS00061">
    <property type="entry name" value="ADH_SHORT"/>
    <property type="match status" value="1"/>
</dbReference>
<reference key="1">
    <citation type="journal article" date="2005" name="Genomics">
        <title>Genomic sequence of the class II region of the canine MHC: comparison with the MHC of other mammalian species.</title>
        <authorList>
            <person name="Debenham S.L."/>
            <person name="Hart E.A."/>
            <person name="Ashurst J.L."/>
            <person name="Howe K.L."/>
            <person name="Quail M.A."/>
            <person name="Ollier W.E.R."/>
            <person name="Binns M.M."/>
        </authorList>
    </citation>
    <scope>NUCLEOTIDE SEQUENCE [LARGE SCALE GENOMIC DNA]</scope>
    <source>
        <strain>Doberman pinscher</strain>
    </source>
</reference>
<proteinExistence type="inferred from homology"/>
<comment type="function">
    <text evidence="3">Required for the solubility and assembly of the heterotetramer 3-ketoacyl-[acyl carrier protein] (ACP) reductase functional complex (KAR or KAR1) that forms part of the mitochondrial fatty acid synthase (mtFAS). Alpha-subunit of the KAR complex that acts as scaffold protein required for the stability of carbonyl reductase type-4 (CBR4, beta-subunit of the KAR complex) and for its 3-ketoacyl-ACP reductase activity, thereby participating in mitochondrial fatty acid biosynthesis. Catalyzes the NAD-dependent conversion of (3R)-3-hydroxyacyl-CoA into 3-ketoacyl-CoA (3-oxoacyl-CoA) with no chain length preference; this enzymatic activity is not needed for the KAR function. Prefers (3R)-3-hydroxyacyl-CoA over (3S)-3-hydroxyacyl-CoA and displays enzymatic activity only in the presence of NAD(+). Cooperates with enoyl-CoA hydratase 1 in mitochondria, together they constitute an alternative route to the auxiliary enzyme pathways for the breakdown of Z-PUFA (cis polyunsaturated fatty acid) enoyl-esters. NAD-dependent 17-beta-hydroxysteroid dehydrogenase with highest activity towards estradiol (17beta-estradiol or E2). Has very low activity towards testosterone and dihydrotestosterone (17beta-hydroxy-5alpha-androstan-3-one). Primarily an oxidative enzyme, it can switch to a reductive mode determined in the appropriate physiologic milieu and catalyze the reduction of estrone (E1) to form biologically active 17beta-estradiol.</text>
</comment>
<comment type="catalytic activity">
    <reaction evidence="3">
        <text>a (3R)-3-hydroxyacyl-CoA + NAD(+) = a 3-oxoacyl-CoA + NADH + H(+)</text>
        <dbReference type="Rhea" id="RHEA:32711"/>
        <dbReference type="ChEBI" id="CHEBI:15378"/>
        <dbReference type="ChEBI" id="CHEBI:57319"/>
        <dbReference type="ChEBI" id="CHEBI:57540"/>
        <dbReference type="ChEBI" id="CHEBI:57945"/>
        <dbReference type="ChEBI" id="CHEBI:90726"/>
        <dbReference type="EC" id="1.1.1.n12"/>
    </reaction>
    <physiologicalReaction direction="left-to-right" evidence="3">
        <dbReference type="Rhea" id="RHEA:32712"/>
    </physiologicalReaction>
</comment>
<comment type="catalytic activity">
    <reaction evidence="3">
        <text>17beta-estradiol + NAD(+) = estrone + NADH + H(+)</text>
        <dbReference type="Rhea" id="RHEA:24612"/>
        <dbReference type="ChEBI" id="CHEBI:15378"/>
        <dbReference type="ChEBI" id="CHEBI:16469"/>
        <dbReference type="ChEBI" id="CHEBI:17263"/>
        <dbReference type="ChEBI" id="CHEBI:57540"/>
        <dbReference type="ChEBI" id="CHEBI:57945"/>
        <dbReference type="EC" id="1.1.1.62"/>
    </reaction>
    <physiologicalReaction direction="left-to-right" evidence="3">
        <dbReference type="Rhea" id="RHEA:24613"/>
    </physiologicalReaction>
    <physiologicalReaction direction="right-to-left" evidence="3">
        <dbReference type="Rhea" id="RHEA:24614"/>
    </physiologicalReaction>
</comment>
<comment type="catalytic activity">
    <reaction evidence="3">
        <text>testosterone + NAD(+) = androst-4-ene-3,17-dione + NADH + H(+)</text>
        <dbReference type="Rhea" id="RHEA:14929"/>
        <dbReference type="ChEBI" id="CHEBI:15378"/>
        <dbReference type="ChEBI" id="CHEBI:16422"/>
        <dbReference type="ChEBI" id="CHEBI:17347"/>
        <dbReference type="ChEBI" id="CHEBI:57540"/>
        <dbReference type="ChEBI" id="CHEBI:57945"/>
        <dbReference type="EC" id="1.1.1.239"/>
    </reaction>
    <physiologicalReaction direction="left-to-right" evidence="3">
        <dbReference type="Rhea" id="RHEA:14930"/>
    </physiologicalReaction>
</comment>
<comment type="catalytic activity">
    <reaction evidence="3">
        <text>17beta-hydroxy-5alpha-androstan-3-one + NAD(+) = 5alpha-androstan-3,17-dione + NADH + H(+)</text>
        <dbReference type="Rhea" id="RHEA:41992"/>
        <dbReference type="ChEBI" id="CHEBI:15378"/>
        <dbReference type="ChEBI" id="CHEBI:15994"/>
        <dbReference type="ChEBI" id="CHEBI:16330"/>
        <dbReference type="ChEBI" id="CHEBI:57540"/>
        <dbReference type="ChEBI" id="CHEBI:57945"/>
    </reaction>
    <physiologicalReaction direction="left-to-right" evidence="3">
        <dbReference type="Rhea" id="RHEA:41993"/>
    </physiologicalReaction>
</comment>
<comment type="pathway">
    <text evidence="3">Steroid biosynthesis; estrogen biosynthesis.</text>
</comment>
<comment type="pathway">
    <text evidence="3">Lipid metabolism; fatty acid biosynthesis.</text>
</comment>
<comment type="pathway">
    <text evidence="3">Lipid metabolism; mitochondrial fatty acid beta-oxidation.</text>
</comment>
<comment type="subunit">
    <text evidence="3">Heterotetramer with CBR4; contains two molecules of HSD17B8 and CBR4.</text>
</comment>
<comment type="subcellular location">
    <subcellularLocation>
        <location evidence="3">Mitochondrion matrix</location>
    </subcellularLocation>
</comment>
<comment type="similarity">
    <text evidence="5">Belongs to the short-chain dehydrogenases/reductases (SDR) family.</text>
</comment>
<accession>Q5TJF5</accession>
<protein>
    <recommendedName>
        <fullName>(3R)-3-hydroxyacyl-CoA dehydrogenase</fullName>
        <ecNumber evidence="3">1.1.1.n12</ecNumber>
    </recommendedName>
    <alternativeName>
        <fullName>17-beta-hydroxysteroid dehydrogenase 8</fullName>
        <shortName>17-beta-HSD 8</shortName>
    </alternativeName>
    <alternativeName>
        <fullName evidence="3">3-ketoacyl-[acyl-carrier-protein] reductase alpha subunit</fullName>
        <shortName evidence="3">KAR alpha subunit</shortName>
    </alternativeName>
    <alternativeName>
        <fullName>3-oxoacyl-[acyl-carrier-protein] reductase</fullName>
    </alternativeName>
    <alternativeName>
        <fullName>Estradiol 17-beta-dehydrogenase 8</fullName>
        <ecNumber evidence="3">1.1.1.62</ecNumber>
    </alternativeName>
    <alternativeName>
        <fullName>Testosterone 17-beta-dehydrogenase 8</fullName>
        <ecNumber evidence="3">1.1.1.239</ecNumber>
    </alternativeName>
</protein>
<organism>
    <name type="scientific">Canis lupus familiaris</name>
    <name type="common">Dog</name>
    <name type="synonym">Canis familiaris</name>
    <dbReference type="NCBI Taxonomy" id="9615"/>
    <lineage>
        <taxon>Eukaryota</taxon>
        <taxon>Metazoa</taxon>
        <taxon>Chordata</taxon>
        <taxon>Craniata</taxon>
        <taxon>Vertebrata</taxon>
        <taxon>Euteleostomi</taxon>
        <taxon>Mammalia</taxon>
        <taxon>Eutheria</taxon>
        <taxon>Laurasiatheria</taxon>
        <taxon>Carnivora</taxon>
        <taxon>Caniformia</taxon>
        <taxon>Canidae</taxon>
        <taxon>Canis</taxon>
    </lineage>
</organism>